<evidence type="ECO:0000250" key="1">
    <source>
        <dbReference type="UniProtKB" id="O52762"/>
    </source>
</evidence>
<evidence type="ECO:0000255" key="2">
    <source>
        <dbReference type="PROSITE-ProRule" id="PRU10013"/>
    </source>
</evidence>
<evidence type="ECO:0000256" key="3">
    <source>
        <dbReference type="SAM" id="MobiDB-lite"/>
    </source>
</evidence>
<evidence type="ECO:0000269" key="4">
    <source>
    </source>
</evidence>
<evidence type="ECO:0000303" key="5">
    <source>
    </source>
</evidence>
<evidence type="ECO:0000305" key="6"/>
<evidence type="ECO:0000305" key="7">
    <source>
    </source>
</evidence>
<reference key="1">
    <citation type="journal article" date="1997" name="Gene">
        <title>Identification of adjacent genes encoding the major catalase and a bacterioferritin from the plant-beneficial bacterium Pseudomonas putida.</title>
        <authorList>
            <person name="Kim Y.C."/>
            <person name="Miller C.D."/>
            <person name="Anderson A.J."/>
        </authorList>
    </citation>
    <scope>NUCLEOTIDE SEQUENCE [GENOMIC DNA]</scope>
    <scope>FUNCTION</scope>
    <scope>CATALYTIC ACTIVITY</scope>
    <scope>DISRUPTION PHENOTYPE</scope>
    <source>
        <strain>Corvallis</strain>
    </source>
</reference>
<protein>
    <recommendedName>
        <fullName evidence="5">Catalase A</fullName>
        <ecNumber evidence="7">1.11.1.6</ecNumber>
    </recommendedName>
</protein>
<sequence>MSKILTTASGAPVADNQNSRSAGPRGPLLLDDFHLIEKLAHFNRENIPERRVHAKGSGAYGTFTVTRDITGYTSAKLFEQVGKQTETFLRFSTVGGERGSADTERDPRGFAVKFYTEEGNWDIVGNNTPVFFIRDPLKFPDFIHTQKRHPQSNLKNAQIFWDSWSHSPEALHQVTILFSDRGIPDGYRHMHGFGSHTYSLINAQGERTWVKWHFKTQQGIKNLAPADAARLAGTDPDYAQRDLFEAIERGDYPRWTVCIQVMSEAEAASRDENPFDVTKTWSQKDYPLIEVGVLELNRNPLNYFAEVEQAAFGPSNMVPGVGLSPDRMLQGRVFAYADAHRYRVGTNHQQLPVNAPRCPVNSYQRDGSMATGSYGSAPNYEPNSYAAAPKQSPRHAEPALALNGSADRYDHREDADYYSHAGALFRLMSDEQKALLISNIAGTMAGVSENVIQRQLQYFFKADPAYGEGIAKGLGINLA</sequence>
<feature type="chain" id="PRO_0000084995" description="Catalase A">
    <location>
        <begin position="1"/>
        <end position="479"/>
    </location>
</feature>
<feature type="region of interest" description="Disordered" evidence="3">
    <location>
        <begin position="1"/>
        <end position="25"/>
    </location>
</feature>
<feature type="region of interest" description="Disordered" evidence="3">
    <location>
        <begin position="350"/>
        <end position="376"/>
    </location>
</feature>
<feature type="compositionally biased region" description="Polar residues" evidence="3">
    <location>
        <begin position="1"/>
        <end position="21"/>
    </location>
</feature>
<feature type="compositionally biased region" description="Polar residues" evidence="3">
    <location>
        <begin position="361"/>
        <end position="376"/>
    </location>
</feature>
<feature type="active site" evidence="2">
    <location>
        <position position="53"/>
    </location>
</feature>
<feature type="active site" evidence="2">
    <location>
        <position position="126"/>
    </location>
</feature>
<feature type="binding site" description="axial binding residue" evidence="1">
    <location>
        <position position="336"/>
    </location>
    <ligand>
        <name>heme</name>
        <dbReference type="ChEBI" id="CHEBI:30413"/>
    </ligand>
    <ligandPart>
        <name>Fe</name>
        <dbReference type="ChEBI" id="CHEBI:18248"/>
    </ligandPart>
</feature>
<keyword id="KW-0349">Heme</keyword>
<keyword id="KW-0376">Hydrogen peroxide</keyword>
<keyword id="KW-0408">Iron</keyword>
<keyword id="KW-0479">Metal-binding</keyword>
<keyword id="KW-0560">Oxidoreductase</keyword>
<keyword id="KW-0575">Peroxidase</keyword>
<name>CATA_PSEPU</name>
<dbReference type="EC" id="1.11.1.6" evidence="7"/>
<dbReference type="EMBL" id="U63511">
    <property type="protein sequence ID" value="AAB88219.1"/>
    <property type="molecule type" value="Genomic_DNA"/>
</dbReference>
<dbReference type="SMR" id="Q59714"/>
<dbReference type="eggNOG" id="COG0753">
    <property type="taxonomic scope" value="Bacteria"/>
</dbReference>
<dbReference type="GO" id="GO:0005737">
    <property type="term" value="C:cytoplasm"/>
    <property type="evidence" value="ECO:0007669"/>
    <property type="project" value="TreeGrafter"/>
</dbReference>
<dbReference type="GO" id="GO:0004096">
    <property type="term" value="F:catalase activity"/>
    <property type="evidence" value="ECO:0007669"/>
    <property type="project" value="UniProtKB-EC"/>
</dbReference>
<dbReference type="GO" id="GO:0020037">
    <property type="term" value="F:heme binding"/>
    <property type="evidence" value="ECO:0007669"/>
    <property type="project" value="InterPro"/>
</dbReference>
<dbReference type="GO" id="GO:0046872">
    <property type="term" value="F:metal ion binding"/>
    <property type="evidence" value="ECO:0007669"/>
    <property type="project" value="UniProtKB-KW"/>
</dbReference>
<dbReference type="GO" id="GO:0042744">
    <property type="term" value="P:hydrogen peroxide catabolic process"/>
    <property type="evidence" value="ECO:0007669"/>
    <property type="project" value="UniProtKB-KW"/>
</dbReference>
<dbReference type="GO" id="GO:0042542">
    <property type="term" value="P:response to hydrogen peroxide"/>
    <property type="evidence" value="ECO:0007669"/>
    <property type="project" value="TreeGrafter"/>
</dbReference>
<dbReference type="CDD" id="cd08156">
    <property type="entry name" value="catalase_clade_3"/>
    <property type="match status" value="1"/>
</dbReference>
<dbReference type="FunFam" id="2.40.180.10:FF:000001">
    <property type="entry name" value="Catalase"/>
    <property type="match status" value="1"/>
</dbReference>
<dbReference type="Gene3D" id="2.40.180.10">
    <property type="entry name" value="Catalase core domain"/>
    <property type="match status" value="1"/>
</dbReference>
<dbReference type="InterPro" id="IPR018028">
    <property type="entry name" value="Catalase"/>
</dbReference>
<dbReference type="InterPro" id="IPR040333">
    <property type="entry name" value="Catalase_3"/>
</dbReference>
<dbReference type="InterPro" id="IPR024708">
    <property type="entry name" value="Catalase_AS"/>
</dbReference>
<dbReference type="InterPro" id="IPR024711">
    <property type="entry name" value="Catalase_clade1/3"/>
</dbReference>
<dbReference type="InterPro" id="IPR011614">
    <property type="entry name" value="Catalase_core"/>
</dbReference>
<dbReference type="InterPro" id="IPR002226">
    <property type="entry name" value="Catalase_haem_BS"/>
</dbReference>
<dbReference type="InterPro" id="IPR010582">
    <property type="entry name" value="Catalase_immune_responsive"/>
</dbReference>
<dbReference type="InterPro" id="IPR020835">
    <property type="entry name" value="Catalase_sf"/>
</dbReference>
<dbReference type="PANTHER" id="PTHR11465">
    <property type="entry name" value="CATALASE"/>
    <property type="match status" value="1"/>
</dbReference>
<dbReference type="PANTHER" id="PTHR11465:SF61">
    <property type="entry name" value="CATALASE"/>
    <property type="match status" value="1"/>
</dbReference>
<dbReference type="Pfam" id="PF00199">
    <property type="entry name" value="Catalase"/>
    <property type="match status" value="1"/>
</dbReference>
<dbReference type="Pfam" id="PF06628">
    <property type="entry name" value="Catalase-rel"/>
    <property type="match status" value="1"/>
</dbReference>
<dbReference type="PIRSF" id="PIRSF038928">
    <property type="entry name" value="Catalase_clade1-3"/>
    <property type="match status" value="1"/>
</dbReference>
<dbReference type="PRINTS" id="PR00067">
    <property type="entry name" value="CATALASE"/>
</dbReference>
<dbReference type="SMART" id="SM01060">
    <property type="entry name" value="Catalase"/>
    <property type="match status" value="1"/>
</dbReference>
<dbReference type="SUPFAM" id="SSF56634">
    <property type="entry name" value="Heme-dependent catalase-like"/>
    <property type="match status" value="1"/>
</dbReference>
<dbReference type="PROSITE" id="PS00437">
    <property type="entry name" value="CATALASE_1"/>
    <property type="match status" value="1"/>
</dbReference>
<dbReference type="PROSITE" id="PS00438">
    <property type="entry name" value="CATALASE_2"/>
    <property type="match status" value="1"/>
</dbReference>
<dbReference type="PROSITE" id="PS51402">
    <property type="entry name" value="CATALASE_3"/>
    <property type="match status" value="1"/>
</dbReference>
<accession>Q59714</accession>
<proteinExistence type="evidence at protein level"/>
<organism>
    <name type="scientific">Pseudomonas putida</name>
    <name type="common">Arthrobacter siderocapsulatus</name>
    <dbReference type="NCBI Taxonomy" id="303"/>
    <lineage>
        <taxon>Bacteria</taxon>
        <taxon>Pseudomonadati</taxon>
        <taxon>Pseudomonadota</taxon>
        <taxon>Gammaproteobacteria</taxon>
        <taxon>Pseudomonadales</taxon>
        <taxon>Pseudomonadaceae</taxon>
        <taxon>Pseudomonas</taxon>
    </lineage>
</organism>
<comment type="function">
    <text evidence="4 7">The major expressed catalase protein in strain Corvallis in stationary phase (PubMed:9358059). Decomposes hydrogen peroxide into water and oxygen; serves to protect cells from the toxic effects of hydrogen peroxide.</text>
</comment>
<comment type="catalytic activity">
    <reaction evidence="7">
        <text>2 H2O2 = O2 + 2 H2O</text>
        <dbReference type="Rhea" id="RHEA:20309"/>
        <dbReference type="ChEBI" id="CHEBI:15377"/>
        <dbReference type="ChEBI" id="CHEBI:15379"/>
        <dbReference type="ChEBI" id="CHEBI:16240"/>
        <dbReference type="EC" id="1.11.1.6"/>
    </reaction>
</comment>
<comment type="cofactor">
    <cofactor evidence="1">
        <name>heme</name>
        <dbReference type="ChEBI" id="CHEBI:30413"/>
    </cofactor>
</comment>
<comment type="activity regulation">
    <text>Activated by peroxide.</text>
</comment>
<comment type="disruption phenotype">
    <text evidence="4">Loss of catalase activity, loss of growth on 5 mM H(2)O(2) (PubMed:9358059).</text>
</comment>
<comment type="similarity">
    <text evidence="6">Belongs to the catalase family.</text>
</comment>
<gene>
    <name type="primary">katA</name>
    <name evidence="5" type="synonym">catA</name>
</gene>